<organism>
    <name type="scientific">Gluconobacter oxydans (strain 621H)</name>
    <name type="common">Gluconobacter suboxydans</name>
    <dbReference type="NCBI Taxonomy" id="290633"/>
    <lineage>
        <taxon>Bacteria</taxon>
        <taxon>Pseudomonadati</taxon>
        <taxon>Pseudomonadota</taxon>
        <taxon>Alphaproteobacteria</taxon>
        <taxon>Acetobacterales</taxon>
        <taxon>Acetobacteraceae</taxon>
        <taxon>Gluconobacter</taxon>
    </lineage>
</organism>
<sequence length="248" mass="25693">MTLISAPRIGIAGITGRLGTLCAEEAGSALVGGLSRTADPQRNITTDPAALAKNCDVVIDVSHASTVPAHAAAFAQAGCAWVLGTTGLDQGAQDAVNAAAQHIPVLQAANFSPALTLFLELARQLGAGLPDYDAEILEVHHRQKLDAPSGTALAIGRAVAEGRGVSFEDVARTDQNGRRPDGAIGFASLRGGQIVGEHDLVLMAADEQITLSHRALDRRVFARGALLAARWLAGRPAGLYTMADALKR</sequence>
<reference key="1">
    <citation type="journal article" date="2005" name="Nat. Biotechnol.">
        <title>Complete genome sequence of the acetic acid bacterium Gluconobacter oxydans.</title>
        <authorList>
            <person name="Prust C."/>
            <person name="Hoffmeister M."/>
            <person name="Liesegang H."/>
            <person name="Wiezer A."/>
            <person name="Fricke W.F."/>
            <person name="Ehrenreich A."/>
            <person name="Gottschalk G."/>
            <person name="Deppenmeier U."/>
        </authorList>
    </citation>
    <scope>NUCLEOTIDE SEQUENCE [LARGE SCALE GENOMIC DNA]</scope>
    <source>
        <strain>621H</strain>
    </source>
</reference>
<dbReference type="EC" id="1.17.1.8" evidence="1"/>
<dbReference type="EMBL" id="CP000009">
    <property type="protein sequence ID" value="AAW60638.1"/>
    <property type="molecule type" value="Genomic_DNA"/>
</dbReference>
<dbReference type="RefSeq" id="WP_011252434.1">
    <property type="nucleotide sequence ID" value="NC_006677.1"/>
</dbReference>
<dbReference type="SMR" id="Q5FSK8"/>
<dbReference type="STRING" id="290633.GOX0864"/>
<dbReference type="KEGG" id="gox:GOX0864"/>
<dbReference type="eggNOG" id="COG0289">
    <property type="taxonomic scope" value="Bacteria"/>
</dbReference>
<dbReference type="HOGENOM" id="CLU_047479_2_2_5"/>
<dbReference type="UniPathway" id="UPA00034">
    <property type="reaction ID" value="UER00018"/>
</dbReference>
<dbReference type="Proteomes" id="UP000006375">
    <property type="component" value="Chromosome"/>
</dbReference>
<dbReference type="GO" id="GO:0005829">
    <property type="term" value="C:cytosol"/>
    <property type="evidence" value="ECO:0007669"/>
    <property type="project" value="TreeGrafter"/>
</dbReference>
<dbReference type="GO" id="GO:0008839">
    <property type="term" value="F:4-hydroxy-tetrahydrodipicolinate reductase"/>
    <property type="evidence" value="ECO:0007669"/>
    <property type="project" value="UniProtKB-EC"/>
</dbReference>
<dbReference type="GO" id="GO:0051287">
    <property type="term" value="F:NAD binding"/>
    <property type="evidence" value="ECO:0007669"/>
    <property type="project" value="UniProtKB-UniRule"/>
</dbReference>
<dbReference type="GO" id="GO:0050661">
    <property type="term" value="F:NADP binding"/>
    <property type="evidence" value="ECO:0007669"/>
    <property type="project" value="UniProtKB-UniRule"/>
</dbReference>
<dbReference type="GO" id="GO:0016726">
    <property type="term" value="F:oxidoreductase activity, acting on CH or CH2 groups, NAD or NADP as acceptor"/>
    <property type="evidence" value="ECO:0007669"/>
    <property type="project" value="UniProtKB-UniRule"/>
</dbReference>
<dbReference type="GO" id="GO:0019877">
    <property type="term" value="P:diaminopimelate biosynthetic process"/>
    <property type="evidence" value="ECO:0007669"/>
    <property type="project" value="UniProtKB-UniRule"/>
</dbReference>
<dbReference type="GO" id="GO:0009089">
    <property type="term" value="P:lysine biosynthetic process via diaminopimelate"/>
    <property type="evidence" value="ECO:0007669"/>
    <property type="project" value="UniProtKB-UniRule"/>
</dbReference>
<dbReference type="Gene3D" id="3.30.360.10">
    <property type="entry name" value="Dihydrodipicolinate Reductase, domain 2"/>
    <property type="match status" value="1"/>
</dbReference>
<dbReference type="Gene3D" id="3.40.50.720">
    <property type="entry name" value="NAD(P)-binding Rossmann-like Domain"/>
    <property type="match status" value="1"/>
</dbReference>
<dbReference type="HAMAP" id="MF_00102">
    <property type="entry name" value="DapB"/>
    <property type="match status" value="1"/>
</dbReference>
<dbReference type="InterPro" id="IPR022663">
    <property type="entry name" value="DapB_C"/>
</dbReference>
<dbReference type="InterPro" id="IPR000846">
    <property type="entry name" value="DapB_N"/>
</dbReference>
<dbReference type="InterPro" id="IPR022664">
    <property type="entry name" value="DapB_N_CS"/>
</dbReference>
<dbReference type="InterPro" id="IPR023940">
    <property type="entry name" value="DHDPR_bac"/>
</dbReference>
<dbReference type="InterPro" id="IPR036291">
    <property type="entry name" value="NAD(P)-bd_dom_sf"/>
</dbReference>
<dbReference type="NCBIfam" id="TIGR00036">
    <property type="entry name" value="dapB"/>
    <property type="match status" value="1"/>
</dbReference>
<dbReference type="PANTHER" id="PTHR20836:SF0">
    <property type="entry name" value="4-HYDROXY-TETRAHYDRODIPICOLINATE REDUCTASE 1, CHLOROPLASTIC-RELATED"/>
    <property type="match status" value="1"/>
</dbReference>
<dbReference type="PANTHER" id="PTHR20836">
    <property type="entry name" value="DIHYDRODIPICOLINATE REDUCTASE"/>
    <property type="match status" value="1"/>
</dbReference>
<dbReference type="Pfam" id="PF05173">
    <property type="entry name" value="DapB_C"/>
    <property type="match status" value="1"/>
</dbReference>
<dbReference type="Pfam" id="PF01113">
    <property type="entry name" value="DapB_N"/>
    <property type="match status" value="1"/>
</dbReference>
<dbReference type="PIRSF" id="PIRSF000161">
    <property type="entry name" value="DHPR"/>
    <property type="match status" value="1"/>
</dbReference>
<dbReference type="SUPFAM" id="SSF55347">
    <property type="entry name" value="Glyceraldehyde-3-phosphate dehydrogenase-like, C-terminal domain"/>
    <property type="match status" value="1"/>
</dbReference>
<dbReference type="SUPFAM" id="SSF51735">
    <property type="entry name" value="NAD(P)-binding Rossmann-fold domains"/>
    <property type="match status" value="1"/>
</dbReference>
<dbReference type="PROSITE" id="PS01298">
    <property type="entry name" value="DAPB"/>
    <property type="match status" value="1"/>
</dbReference>
<comment type="function">
    <text evidence="1">Catalyzes the conversion of 4-hydroxy-tetrahydrodipicolinate (HTPA) to tetrahydrodipicolinate.</text>
</comment>
<comment type="catalytic activity">
    <reaction evidence="1">
        <text>(S)-2,3,4,5-tetrahydrodipicolinate + NAD(+) + H2O = (2S,4S)-4-hydroxy-2,3,4,5-tetrahydrodipicolinate + NADH + H(+)</text>
        <dbReference type="Rhea" id="RHEA:35323"/>
        <dbReference type="ChEBI" id="CHEBI:15377"/>
        <dbReference type="ChEBI" id="CHEBI:15378"/>
        <dbReference type="ChEBI" id="CHEBI:16845"/>
        <dbReference type="ChEBI" id="CHEBI:57540"/>
        <dbReference type="ChEBI" id="CHEBI:57945"/>
        <dbReference type="ChEBI" id="CHEBI:67139"/>
        <dbReference type="EC" id="1.17.1.8"/>
    </reaction>
</comment>
<comment type="catalytic activity">
    <reaction evidence="1">
        <text>(S)-2,3,4,5-tetrahydrodipicolinate + NADP(+) + H2O = (2S,4S)-4-hydroxy-2,3,4,5-tetrahydrodipicolinate + NADPH + H(+)</text>
        <dbReference type="Rhea" id="RHEA:35331"/>
        <dbReference type="ChEBI" id="CHEBI:15377"/>
        <dbReference type="ChEBI" id="CHEBI:15378"/>
        <dbReference type="ChEBI" id="CHEBI:16845"/>
        <dbReference type="ChEBI" id="CHEBI:57783"/>
        <dbReference type="ChEBI" id="CHEBI:58349"/>
        <dbReference type="ChEBI" id="CHEBI:67139"/>
        <dbReference type="EC" id="1.17.1.8"/>
    </reaction>
</comment>
<comment type="pathway">
    <text evidence="1">Amino-acid biosynthesis; L-lysine biosynthesis via DAP pathway; (S)-tetrahydrodipicolinate from L-aspartate: step 4/4.</text>
</comment>
<comment type="subcellular location">
    <subcellularLocation>
        <location evidence="1">Cytoplasm</location>
    </subcellularLocation>
</comment>
<comment type="similarity">
    <text evidence="1">Belongs to the DapB family.</text>
</comment>
<comment type="caution">
    <text evidence="2">Was originally thought to be a dihydrodipicolinate reductase (DHDPR), catalyzing the conversion of dihydrodipicolinate to tetrahydrodipicolinate. However, it was shown in E.coli that the substrate of the enzymatic reaction is not dihydrodipicolinate (DHDP) but in fact (2S,4S)-4-hydroxy-2,3,4,5-tetrahydrodipicolinic acid (HTPA), the product released by the DapA-catalyzed reaction.</text>
</comment>
<feature type="chain" id="PRO_0000228354" description="4-hydroxy-tetrahydrodipicolinate reductase">
    <location>
        <begin position="1"/>
        <end position="248"/>
    </location>
</feature>
<feature type="active site" description="Proton donor/acceptor" evidence="1">
    <location>
        <position position="140"/>
    </location>
</feature>
<feature type="active site" description="Proton donor" evidence="1">
    <location>
        <position position="144"/>
    </location>
</feature>
<feature type="binding site" evidence="1">
    <location>
        <begin position="13"/>
        <end position="18"/>
    </location>
    <ligand>
        <name>NAD(+)</name>
        <dbReference type="ChEBI" id="CHEBI:57540"/>
    </ligand>
</feature>
<feature type="binding site" evidence="1">
    <location>
        <position position="36"/>
    </location>
    <ligand>
        <name>NADP(+)</name>
        <dbReference type="ChEBI" id="CHEBI:58349"/>
    </ligand>
</feature>
<feature type="binding site" evidence="1">
    <location>
        <begin position="84"/>
        <end position="86"/>
    </location>
    <ligand>
        <name>NAD(+)</name>
        <dbReference type="ChEBI" id="CHEBI:57540"/>
    </ligand>
</feature>
<feature type="binding site" evidence="1">
    <location>
        <begin position="108"/>
        <end position="111"/>
    </location>
    <ligand>
        <name>NAD(+)</name>
        <dbReference type="ChEBI" id="CHEBI:57540"/>
    </ligand>
</feature>
<feature type="binding site" evidence="1">
    <location>
        <position position="141"/>
    </location>
    <ligand>
        <name>(S)-2,3,4,5-tetrahydrodipicolinate</name>
        <dbReference type="ChEBI" id="CHEBI:16845"/>
    </ligand>
</feature>
<feature type="binding site" evidence="1">
    <location>
        <begin position="150"/>
        <end position="151"/>
    </location>
    <ligand>
        <name>(S)-2,3,4,5-tetrahydrodipicolinate</name>
        <dbReference type="ChEBI" id="CHEBI:16845"/>
    </ligand>
</feature>
<evidence type="ECO:0000255" key="1">
    <source>
        <dbReference type="HAMAP-Rule" id="MF_00102"/>
    </source>
</evidence>
<evidence type="ECO:0000305" key="2"/>
<gene>
    <name evidence="1" type="primary">dapB</name>
    <name type="ordered locus">GOX0864</name>
</gene>
<protein>
    <recommendedName>
        <fullName evidence="1">4-hydroxy-tetrahydrodipicolinate reductase</fullName>
        <shortName evidence="1">HTPA reductase</shortName>
        <ecNumber evidence="1">1.17.1.8</ecNumber>
    </recommendedName>
</protein>
<name>DAPB_GLUOX</name>
<keyword id="KW-0028">Amino-acid biosynthesis</keyword>
<keyword id="KW-0963">Cytoplasm</keyword>
<keyword id="KW-0220">Diaminopimelate biosynthesis</keyword>
<keyword id="KW-0457">Lysine biosynthesis</keyword>
<keyword id="KW-0520">NAD</keyword>
<keyword id="KW-0521">NADP</keyword>
<keyword id="KW-0560">Oxidoreductase</keyword>
<keyword id="KW-1185">Reference proteome</keyword>
<proteinExistence type="inferred from homology"/>
<accession>Q5FSK8</accession>